<comment type="subunit">
    <text evidence="1">Part of the 30S ribosomal subunit.</text>
</comment>
<comment type="similarity">
    <text evidence="1">Belongs to the universal ribosomal protein uS15 family.</text>
</comment>
<proteinExistence type="inferred from homology"/>
<accession>A0RTT1</accession>
<gene>
    <name evidence="1" type="primary">rps15</name>
    <name type="ordered locus">CENSYa_0103</name>
</gene>
<sequence length="148" mass="16742">MGRLHSHRHGKSHSIRPSSPKAPSWIQGPGEVEDLIVKYAKEGLAPSQIGSKLRDQHAIPLTRPITGKSVTQIMEEHGATPELPEDLNNIVQKAVGLQRHLRANKGDRRNVRSLELIEAKVHRLDVYYKRIGRIPKDWKYKSVVAQLE</sequence>
<evidence type="ECO:0000255" key="1">
    <source>
        <dbReference type="HAMAP-Rule" id="MF_01343"/>
    </source>
</evidence>
<evidence type="ECO:0000256" key="2">
    <source>
        <dbReference type="SAM" id="MobiDB-lite"/>
    </source>
</evidence>
<evidence type="ECO:0000305" key="3"/>
<feature type="chain" id="PRO_0000354222" description="Small ribosomal subunit protein uS15">
    <location>
        <begin position="1"/>
        <end position="148"/>
    </location>
</feature>
<feature type="region of interest" description="Disordered" evidence="2">
    <location>
        <begin position="1"/>
        <end position="27"/>
    </location>
</feature>
<feature type="compositionally biased region" description="Basic residues" evidence="2">
    <location>
        <begin position="1"/>
        <end position="14"/>
    </location>
</feature>
<dbReference type="EMBL" id="DP000238">
    <property type="protein sequence ID" value="ABK76748.1"/>
    <property type="molecule type" value="Genomic_DNA"/>
</dbReference>
<dbReference type="SMR" id="A0RTT1"/>
<dbReference type="STRING" id="414004.CENSYa_0103"/>
<dbReference type="EnsemblBacteria" id="ABK76748">
    <property type="protein sequence ID" value="ABK76748"/>
    <property type="gene ID" value="CENSYa_0103"/>
</dbReference>
<dbReference type="KEGG" id="csy:CENSYa_0103"/>
<dbReference type="PATRIC" id="fig|414004.10.peg.92"/>
<dbReference type="HOGENOM" id="CLU_090139_2_0_2"/>
<dbReference type="Proteomes" id="UP000000758">
    <property type="component" value="Chromosome"/>
</dbReference>
<dbReference type="GO" id="GO:0022627">
    <property type="term" value="C:cytosolic small ribosomal subunit"/>
    <property type="evidence" value="ECO:0007669"/>
    <property type="project" value="TreeGrafter"/>
</dbReference>
<dbReference type="GO" id="GO:0070181">
    <property type="term" value="F:small ribosomal subunit rRNA binding"/>
    <property type="evidence" value="ECO:0007669"/>
    <property type="project" value="TreeGrafter"/>
</dbReference>
<dbReference type="GO" id="GO:0003735">
    <property type="term" value="F:structural constituent of ribosome"/>
    <property type="evidence" value="ECO:0007669"/>
    <property type="project" value="InterPro"/>
</dbReference>
<dbReference type="GO" id="GO:0006412">
    <property type="term" value="P:translation"/>
    <property type="evidence" value="ECO:0007669"/>
    <property type="project" value="UniProtKB-UniRule"/>
</dbReference>
<dbReference type="FunFam" id="1.10.287.10:FF:000003">
    <property type="entry name" value="40S ribosomal protein S13"/>
    <property type="match status" value="1"/>
</dbReference>
<dbReference type="Gene3D" id="4.10.860.130">
    <property type="match status" value="1"/>
</dbReference>
<dbReference type="Gene3D" id="1.10.287.10">
    <property type="entry name" value="S15/NS1, RNA-binding"/>
    <property type="match status" value="1"/>
</dbReference>
<dbReference type="HAMAP" id="MF_01343_A">
    <property type="entry name" value="Ribosomal_uS15_A"/>
    <property type="match status" value="1"/>
</dbReference>
<dbReference type="InterPro" id="IPR000589">
    <property type="entry name" value="Ribosomal_uS15"/>
</dbReference>
<dbReference type="InterPro" id="IPR023029">
    <property type="entry name" value="Ribosomal_uS15_arc_euk"/>
</dbReference>
<dbReference type="InterPro" id="IPR012606">
    <property type="entry name" value="Ribosomal_uS15_N"/>
</dbReference>
<dbReference type="InterPro" id="IPR009068">
    <property type="entry name" value="uS15_NS1_RNA-bd_sf"/>
</dbReference>
<dbReference type="NCBIfam" id="NF006331">
    <property type="entry name" value="PRK08561.1"/>
    <property type="match status" value="1"/>
</dbReference>
<dbReference type="PANTHER" id="PTHR11885">
    <property type="entry name" value="RIBOSOMAL PROTEIN S15P/S13E"/>
    <property type="match status" value="1"/>
</dbReference>
<dbReference type="PANTHER" id="PTHR11885:SF6">
    <property type="entry name" value="SMALL RIBOSOMAL SUBUNIT PROTEIN US15"/>
    <property type="match status" value="1"/>
</dbReference>
<dbReference type="Pfam" id="PF08069">
    <property type="entry name" value="Ribosomal_S13_N"/>
    <property type="match status" value="1"/>
</dbReference>
<dbReference type="Pfam" id="PF00312">
    <property type="entry name" value="Ribosomal_S15"/>
    <property type="match status" value="1"/>
</dbReference>
<dbReference type="SMART" id="SM01386">
    <property type="entry name" value="Ribosomal_S13_N"/>
    <property type="match status" value="1"/>
</dbReference>
<dbReference type="SMART" id="SM01387">
    <property type="entry name" value="Ribosomal_S15"/>
    <property type="match status" value="1"/>
</dbReference>
<dbReference type="SUPFAM" id="SSF47060">
    <property type="entry name" value="S15/NS1 RNA-binding domain"/>
    <property type="match status" value="1"/>
</dbReference>
<dbReference type="PROSITE" id="PS00362">
    <property type="entry name" value="RIBOSOMAL_S15"/>
    <property type="match status" value="1"/>
</dbReference>
<name>RS15_CENSY</name>
<reference key="1">
    <citation type="journal article" date="2006" name="Proc. Natl. Acad. Sci. U.S.A.">
        <title>Genomic analysis of the uncultivated marine crenarchaeote Cenarchaeum symbiosum.</title>
        <authorList>
            <person name="Hallam S.J."/>
            <person name="Konstantinidis K.T."/>
            <person name="Putnam N."/>
            <person name="Schleper C."/>
            <person name="Watanabe Y."/>
            <person name="Sugahara J."/>
            <person name="Preston C."/>
            <person name="de la Torre J."/>
            <person name="Richardson P.M."/>
            <person name="DeLong E.F."/>
        </authorList>
    </citation>
    <scope>NUCLEOTIDE SEQUENCE [LARGE SCALE GENOMIC DNA]</scope>
    <source>
        <strain>A</strain>
    </source>
</reference>
<protein>
    <recommendedName>
        <fullName evidence="1">Small ribosomal subunit protein uS15</fullName>
    </recommendedName>
    <alternativeName>
        <fullName evidence="3">30S ribosomal protein S15</fullName>
    </alternativeName>
</protein>
<organism>
    <name type="scientific">Cenarchaeum symbiosum (strain A)</name>
    <dbReference type="NCBI Taxonomy" id="414004"/>
    <lineage>
        <taxon>Archaea</taxon>
        <taxon>Nitrososphaerota</taxon>
        <taxon>Candidatus Cenarchaeales</taxon>
        <taxon>Candidatus Cenarchaeaceae</taxon>
        <taxon>Candidatus Cenarchaeum</taxon>
    </lineage>
</organism>
<keyword id="KW-1185">Reference proteome</keyword>
<keyword id="KW-0687">Ribonucleoprotein</keyword>
<keyword id="KW-0689">Ribosomal protein</keyword>